<sequence>MVKVMVVAEVRPSEDVNKVLSAISNFFDFEKMNTRKEGIIDILVLEARTLKSLLKFHRVLRNERILDSARKYLMKGIEGNTIAFMIHKQAAAVGVLSFVDSDKESPLGAIKFYIEYQNPKEIVDWLAPKTAHGVPLWDNPVPPDV</sequence>
<comment type="similarity">
    <text evidence="1">Belongs to the UPF0201 family.</text>
</comment>
<keyword id="KW-0002">3D-structure</keyword>
<keyword id="KW-1185">Reference proteome</keyword>
<gene>
    <name type="ordered locus">SSO1042</name>
</gene>
<protein>
    <recommendedName>
        <fullName evidence="1">UPF0201 protein SSO1042</fullName>
    </recommendedName>
</protein>
<name>Y1042_SACS2</name>
<reference key="1">
    <citation type="journal article" date="2001" name="Proc. Natl. Acad. Sci. U.S.A.">
        <title>The complete genome of the crenarchaeon Sulfolobus solfataricus P2.</title>
        <authorList>
            <person name="She Q."/>
            <person name="Singh R.K."/>
            <person name="Confalonieri F."/>
            <person name="Zivanovic Y."/>
            <person name="Allard G."/>
            <person name="Awayez M.J."/>
            <person name="Chan-Weiher C.C.-Y."/>
            <person name="Clausen I.G."/>
            <person name="Curtis B.A."/>
            <person name="De Moors A."/>
            <person name="Erauso G."/>
            <person name="Fletcher C."/>
            <person name="Gordon P.M.K."/>
            <person name="Heikamp-de Jong I."/>
            <person name="Jeffries A.C."/>
            <person name="Kozera C.J."/>
            <person name="Medina N."/>
            <person name="Peng X."/>
            <person name="Thi-Ngoc H.P."/>
            <person name="Redder P."/>
            <person name="Schenk M.E."/>
            <person name="Theriault C."/>
            <person name="Tolstrup N."/>
            <person name="Charlebois R.L."/>
            <person name="Doolittle W.F."/>
            <person name="Duguet M."/>
            <person name="Gaasterland T."/>
            <person name="Garrett R.A."/>
            <person name="Ragan M.A."/>
            <person name="Sensen C.W."/>
            <person name="Van der Oost J."/>
        </authorList>
    </citation>
    <scope>NUCLEOTIDE SEQUENCE [LARGE SCALE GENOMIC DNA]</scope>
    <source>
        <strain>ATCC 35092 / DSM 1617 / JCM 11322 / P2</strain>
    </source>
</reference>
<evidence type="ECO:0000255" key="1">
    <source>
        <dbReference type="HAMAP-Rule" id="MF_01112"/>
    </source>
</evidence>
<evidence type="ECO:0007829" key="2">
    <source>
        <dbReference type="PDB" id="2NWU"/>
    </source>
</evidence>
<proteinExistence type="evidence at protein level"/>
<organism>
    <name type="scientific">Saccharolobus solfataricus (strain ATCC 35092 / DSM 1617 / JCM 11322 / P2)</name>
    <name type="common">Sulfolobus solfataricus</name>
    <dbReference type="NCBI Taxonomy" id="273057"/>
    <lineage>
        <taxon>Archaea</taxon>
        <taxon>Thermoproteota</taxon>
        <taxon>Thermoprotei</taxon>
        <taxon>Sulfolobales</taxon>
        <taxon>Sulfolobaceae</taxon>
        <taxon>Saccharolobus</taxon>
    </lineage>
</organism>
<feature type="chain" id="PRO_0000094519" description="UPF0201 protein SSO1042">
    <location>
        <begin position="1"/>
        <end position="145"/>
    </location>
</feature>
<feature type="strand" evidence="2">
    <location>
        <begin position="3"/>
        <end position="10"/>
    </location>
</feature>
<feature type="helix" evidence="2">
    <location>
        <begin position="16"/>
        <end position="24"/>
    </location>
</feature>
<feature type="strand" evidence="2">
    <location>
        <begin position="30"/>
        <end position="33"/>
    </location>
</feature>
<feature type="strand" evidence="2">
    <location>
        <begin position="35"/>
        <end position="37"/>
    </location>
</feature>
<feature type="strand" evidence="2">
    <location>
        <begin position="41"/>
        <end position="49"/>
    </location>
</feature>
<feature type="helix" evidence="2">
    <location>
        <begin position="50"/>
        <end position="53"/>
    </location>
</feature>
<feature type="helix" evidence="2">
    <location>
        <begin position="54"/>
        <end position="62"/>
    </location>
</feature>
<feature type="helix" evidence="2">
    <location>
        <begin position="66"/>
        <end position="76"/>
    </location>
</feature>
<feature type="strand" evidence="2">
    <location>
        <begin position="79"/>
        <end position="86"/>
    </location>
</feature>
<feature type="helix" evidence="2">
    <location>
        <begin position="88"/>
        <end position="92"/>
    </location>
</feature>
<feature type="strand" evidence="2">
    <location>
        <begin position="110"/>
        <end position="115"/>
    </location>
</feature>
<feature type="helix" evidence="2">
    <location>
        <begin position="119"/>
        <end position="126"/>
    </location>
</feature>
<feature type="strand" evidence="2">
    <location>
        <begin position="134"/>
        <end position="136"/>
    </location>
</feature>
<dbReference type="EMBL" id="AE006641">
    <property type="protein sequence ID" value="AAK41304.1"/>
    <property type="molecule type" value="Genomic_DNA"/>
</dbReference>
<dbReference type="PIR" id="A99256">
    <property type="entry name" value="A99256"/>
</dbReference>
<dbReference type="RefSeq" id="WP_009989187.1">
    <property type="nucleotide sequence ID" value="NC_002754.1"/>
</dbReference>
<dbReference type="PDB" id="2NWU">
    <property type="method" value="X-ray"/>
    <property type="resolution" value="2.40 A"/>
    <property type="chains" value="A/B=2-145"/>
</dbReference>
<dbReference type="PDBsum" id="2NWU"/>
<dbReference type="SMR" id="Q97Z89"/>
<dbReference type="STRING" id="273057.SSO1042"/>
<dbReference type="PaxDb" id="273057-SSO1042"/>
<dbReference type="EnsemblBacteria" id="AAK41304">
    <property type="protein sequence ID" value="AAK41304"/>
    <property type="gene ID" value="SSO1042"/>
</dbReference>
<dbReference type="KEGG" id="sso:SSO1042"/>
<dbReference type="PATRIC" id="fig|273057.12.peg.1036"/>
<dbReference type="eggNOG" id="arCOG01043">
    <property type="taxonomic scope" value="Archaea"/>
</dbReference>
<dbReference type="HOGENOM" id="CLU_134829_1_0_2"/>
<dbReference type="InParanoid" id="Q97Z89"/>
<dbReference type="PhylomeDB" id="Q97Z89"/>
<dbReference type="EvolutionaryTrace" id="Q97Z89"/>
<dbReference type="Proteomes" id="UP000001974">
    <property type="component" value="Chromosome"/>
</dbReference>
<dbReference type="Gene3D" id="3.30.1440.10">
    <property type="match status" value="1"/>
</dbReference>
<dbReference type="HAMAP" id="MF_01112">
    <property type="entry name" value="UPF0201"/>
    <property type="match status" value="1"/>
</dbReference>
<dbReference type="InterPro" id="IPR002739">
    <property type="entry name" value="PAB1135-like"/>
</dbReference>
<dbReference type="InterPro" id="IPR022803">
    <property type="entry name" value="Ribosomal_uL5_dom_sf"/>
</dbReference>
<dbReference type="NCBIfam" id="NF001687">
    <property type="entry name" value="PRK00447.1"/>
    <property type="match status" value="1"/>
</dbReference>
<dbReference type="PANTHER" id="PTHR39652">
    <property type="entry name" value="UPF0201 PROTEIN TK1335"/>
    <property type="match status" value="1"/>
</dbReference>
<dbReference type="PANTHER" id="PTHR39652:SF1">
    <property type="entry name" value="UPF0201 PROTEIN TK1335"/>
    <property type="match status" value="1"/>
</dbReference>
<dbReference type="Pfam" id="PF01877">
    <property type="entry name" value="RNA_binding"/>
    <property type="match status" value="1"/>
</dbReference>
<dbReference type="SUPFAM" id="SSF55282">
    <property type="entry name" value="RL5-like"/>
    <property type="match status" value="1"/>
</dbReference>
<accession>Q97Z89</accession>